<evidence type="ECO:0000255" key="1">
    <source>
        <dbReference type="HAMAP-Rule" id="MF_00041"/>
    </source>
</evidence>
<protein>
    <recommendedName>
        <fullName evidence="1">Cysteine--tRNA ligase</fullName>
        <ecNumber evidence="1">6.1.1.16</ecNumber>
    </recommendedName>
    <alternativeName>
        <fullName evidence="1">Cysteinyl-tRNA synthetase</fullName>
        <shortName evidence="1">CysRS</shortName>
    </alternativeName>
</protein>
<dbReference type="EC" id="6.1.1.16" evidence="1"/>
<dbReference type="EMBL" id="CR954246">
    <property type="protein sequence ID" value="CAI87121.1"/>
    <property type="molecule type" value="Genomic_DNA"/>
</dbReference>
<dbReference type="SMR" id="Q3IF51"/>
<dbReference type="STRING" id="326442.PSHAa2065"/>
<dbReference type="KEGG" id="pha:PSHAa2065"/>
<dbReference type="PATRIC" id="fig|326442.8.peg.1992"/>
<dbReference type="eggNOG" id="COG0215">
    <property type="taxonomic scope" value="Bacteria"/>
</dbReference>
<dbReference type="HOGENOM" id="CLU_013528_0_1_6"/>
<dbReference type="BioCyc" id="PHAL326442:PSHA_RS10225-MONOMER"/>
<dbReference type="Proteomes" id="UP000006843">
    <property type="component" value="Chromosome I"/>
</dbReference>
<dbReference type="GO" id="GO:0005829">
    <property type="term" value="C:cytosol"/>
    <property type="evidence" value="ECO:0007669"/>
    <property type="project" value="TreeGrafter"/>
</dbReference>
<dbReference type="GO" id="GO:0005524">
    <property type="term" value="F:ATP binding"/>
    <property type="evidence" value="ECO:0007669"/>
    <property type="project" value="UniProtKB-UniRule"/>
</dbReference>
<dbReference type="GO" id="GO:0004817">
    <property type="term" value="F:cysteine-tRNA ligase activity"/>
    <property type="evidence" value="ECO:0007669"/>
    <property type="project" value="UniProtKB-UniRule"/>
</dbReference>
<dbReference type="GO" id="GO:0008270">
    <property type="term" value="F:zinc ion binding"/>
    <property type="evidence" value="ECO:0007669"/>
    <property type="project" value="UniProtKB-UniRule"/>
</dbReference>
<dbReference type="GO" id="GO:0006423">
    <property type="term" value="P:cysteinyl-tRNA aminoacylation"/>
    <property type="evidence" value="ECO:0007669"/>
    <property type="project" value="UniProtKB-UniRule"/>
</dbReference>
<dbReference type="CDD" id="cd07963">
    <property type="entry name" value="Anticodon_Ia_Cys"/>
    <property type="match status" value="1"/>
</dbReference>
<dbReference type="CDD" id="cd00672">
    <property type="entry name" value="CysRS_core"/>
    <property type="match status" value="1"/>
</dbReference>
<dbReference type="FunFam" id="3.40.50.620:FF:000009">
    <property type="entry name" value="Cysteine--tRNA ligase"/>
    <property type="match status" value="1"/>
</dbReference>
<dbReference type="Gene3D" id="1.20.120.1910">
    <property type="entry name" value="Cysteine-tRNA ligase, C-terminal anti-codon recognition domain"/>
    <property type="match status" value="1"/>
</dbReference>
<dbReference type="Gene3D" id="3.40.50.620">
    <property type="entry name" value="HUPs"/>
    <property type="match status" value="1"/>
</dbReference>
<dbReference type="HAMAP" id="MF_00041">
    <property type="entry name" value="Cys_tRNA_synth"/>
    <property type="match status" value="1"/>
</dbReference>
<dbReference type="InterPro" id="IPR015803">
    <property type="entry name" value="Cys-tRNA-ligase"/>
</dbReference>
<dbReference type="InterPro" id="IPR015273">
    <property type="entry name" value="Cys-tRNA-synt_Ia_DALR"/>
</dbReference>
<dbReference type="InterPro" id="IPR024909">
    <property type="entry name" value="Cys-tRNA/MSH_ligase"/>
</dbReference>
<dbReference type="InterPro" id="IPR056411">
    <property type="entry name" value="CysS_C"/>
</dbReference>
<dbReference type="InterPro" id="IPR014729">
    <property type="entry name" value="Rossmann-like_a/b/a_fold"/>
</dbReference>
<dbReference type="InterPro" id="IPR032678">
    <property type="entry name" value="tRNA-synt_1_cat_dom"/>
</dbReference>
<dbReference type="InterPro" id="IPR009080">
    <property type="entry name" value="tRNAsynth_Ia_anticodon-bd"/>
</dbReference>
<dbReference type="NCBIfam" id="TIGR00435">
    <property type="entry name" value="cysS"/>
    <property type="match status" value="1"/>
</dbReference>
<dbReference type="PANTHER" id="PTHR10890:SF3">
    <property type="entry name" value="CYSTEINE--TRNA LIGASE, CYTOPLASMIC"/>
    <property type="match status" value="1"/>
</dbReference>
<dbReference type="PANTHER" id="PTHR10890">
    <property type="entry name" value="CYSTEINYL-TRNA SYNTHETASE"/>
    <property type="match status" value="1"/>
</dbReference>
<dbReference type="Pfam" id="PF23493">
    <property type="entry name" value="CysS_C"/>
    <property type="match status" value="1"/>
</dbReference>
<dbReference type="Pfam" id="PF09190">
    <property type="entry name" value="DALR_2"/>
    <property type="match status" value="1"/>
</dbReference>
<dbReference type="Pfam" id="PF01406">
    <property type="entry name" value="tRNA-synt_1e"/>
    <property type="match status" value="1"/>
</dbReference>
<dbReference type="PRINTS" id="PR00983">
    <property type="entry name" value="TRNASYNTHCYS"/>
</dbReference>
<dbReference type="SMART" id="SM00840">
    <property type="entry name" value="DALR_2"/>
    <property type="match status" value="1"/>
</dbReference>
<dbReference type="SUPFAM" id="SSF47323">
    <property type="entry name" value="Anticodon-binding domain of a subclass of class I aminoacyl-tRNA synthetases"/>
    <property type="match status" value="1"/>
</dbReference>
<dbReference type="SUPFAM" id="SSF52374">
    <property type="entry name" value="Nucleotidylyl transferase"/>
    <property type="match status" value="1"/>
</dbReference>
<reference key="1">
    <citation type="journal article" date="2005" name="Genome Res.">
        <title>Coping with cold: the genome of the versatile marine Antarctica bacterium Pseudoalteromonas haloplanktis TAC125.</title>
        <authorList>
            <person name="Medigue C."/>
            <person name="Krin E."/>
            <person name="Pascal G."/>
            <person name="Barbe V."/>
            <person name="Bernsel A."/>
            <person name="Bertin P.N."/>
            <person name="Cheung F."/>
            <person name="Cruveiller S."/>
            <person name="D'Amico S."/>
            <person name="Duilio A."/>
            <person name="Fang G."/>
            <person name="Feller G."/>
            <person name="Ho C."/>
            <person name="Mangenot S."/>
            <person name="Marino G."/>
            <person name="Nilsson J."/>
            <person name="Parrilli E."/>
            <person name="Rocha E.P.C."/>
            <person name="Rouy Z."/>
            <person name="Sekowska A."/>
            <person name="Tutino M.L."/>
            <person name="Vallenet D."/>
            <person name="von Heijne G."/>
            <person name="Danchin A."/>
        </authorList>
    </citation>
    <scope>NUCLEOTIDE SEQUENCE [LARGE SCALE GENOMIC DNA]</scope>
    <source>
        <strain>TAC 125</strain>
    </source>
</reference>
<organism>
    <name type="scientific">Pseudoalteromonas translucida (strain TAC 125)</name>
    <dbReference type="NCBI Taxonomy" id="326442"/>
    <lineage>
        <taxon>Bacteria</taxon>
        <taxon>Pseudomonadati</taxon>
        <taxon>Pseudomonadota</taxon>
        <taxon>Gammaproteobacteria</taxon>
        <taxon>Alteromonadales</taxon>
        <taxon>Pseudoalteromonadaceae</taxon>
        <taxon>Pseudoalteromonas</taxon>
    </lineage>
</organism>
<accession>Q3IF51</accession>
<comment type="catalytic activity">
    <reaction evidence="1">
        <text>tRNA(Cys) + L-cysteine + ATP = L-cysteinyl-tRNA(Cys) + AMP + diphosphate</text>
        <dbReference type="Rhea" id="RHEA:17773"/>
        <dbReference type="Rhea" id="RHEA-COMP:9661"/>
        <dbReference type="Rhea" id="RHEA-COMP:9679"/>
        <dbReference type="ChEBI" id="CHEBI:30616"/>
        <dbReference type="ChEBI" id="CHEBI:33019"/>
        <dbReference type="ChEBI" id="CHEBI:35235"/>
        <dbReference type="ChEBI" id="CHEBI:78442"/>
        <dbReference type="ChEBI" id="CHEBI:78517"/>
        <dbReference type="ChEBI" id="CHEBI:456215"/>
        <dbReference type="EC" id="6.1.1.16"/>
    </reaction>
</comment>
<comment type="cofactor">
    <cofactor evidence="1">
        <name>Zn(2+)</name>
        <dbReference type="ChEBI" id="CHEBI:29105"/>
    </cofactor>
    <text evidence="1">Binds 1 zinc ion per subunit.</text>
</comment>
<comment type="subunit">
    <text evidence="1">Monomer.</text>
</comment>
<comment type="subcellular location">
    <subcellularLocation>
        <location evidence="1">Cytoplasm</location>
    </subcellularLocation>
</comment>
<comment type="similarity">
    <text evidence="1">Belongs to the class-I aminoacyl-tRNA synthetase family.</text>
</comment>
<proteinExistence type="inferred from homology"/>
<keyword id="KW-0030">Aminoacyl-tRNA synthetase</keyword>
<keyword id="KW-0067">ATP-binding</keyword>
<keyword id="KW-0963">Cytoplasm</keyword>
<keyword id="KW-0436">Ligase</keyword>
<keyword id="KW-0479">Metal-binding</keyword>
<keyword id="KW-0547">Nucleotide-binding</keyword>
<keyword id="KW-0648">Protein biosynthesis</keyword>
<keyword id="KW-1185">Reference proteome</keyword>
<keyword id="KW-0862">Zinc</keyword>
<sequence>MVNIYNTLTRQKEQFKPMVEGKIDMYVCGITIYDYCHIGHARTFVGFDVIVRYLRHIGYDLKYVRNITDVDDKIIKRANENGESINDLTVRMTKAMHEDFDSLNMLRPDVEPTVTAHMDEIIEMVERLITKGHAYVAADGDVLFDVSTFEQYGALSQQDLTMLQSGSRVEVAQDKDDPLDFVLWKKAKAGEPSWSSPWGEGRPGWHIECSAMSSKHLGEHFDIHGGGSDLQFPHHENEIAQSCCANNGKYVNTWIHTGMVQVNKEKMSKSLDNFFTVREVLKQYDAESVRYFLISGHYRSQLNYSQENLDQARSSLERIYTALRGVEPVACELDDNEYVIKFRKAMDDDFNTPEALPVLFELAKELNLVKDIDSQQAGQLAFILGSISEVLGVAQQDPEAFLQGGQDDDEVAQIEALIVKRNDARASKNWAAADEARDALSALGVILEDSAGKTTWRKA</sequence>
<gene>
    <name evidence="1" type="primary">cysS</name>
    <name type="ordered locus">PSHAa2065</name>
</gene>
<name>SYC_PSET1</name>
<feature type="chain" id="PRO_0000240935" description="Cysteine--tRNA ligase">
    <location>
        <begin position="1"/>
        <end position="459"/>
    </location>
</feature>
<feature type="short sequence motif" description="'HIGH' region">
    <location>
        <begin position="30"/>
        <end position="40"/>
    </location>
</feature>
<feature type="short sequence motif" description="'KMSKS' region">
    <location>
        <begin position="266"/>
        <end position="270"/>
    </location>
</feature>
<feature type="binding site" evidence="1">
    <location>
        <position position="28"/>
    </location>
    <ligand>
        <name>Zn(2+)</name>
        <dbReference type="ChEBI" id="CHEBI:29105"/>
    </ligand>
</feature>
<feature type="binding site" evidence="1">
    <location>
        <position position="209"/>
    </location>
    <ligand>
        <name>Zn(2+)</name>
        <dbReference type="ChEBI" id="CHEBI:29105"/>
    </ligand>
</feature>
<feature type="binding site" evidence="1">
    <location>
        <position position="234"/>
    </location>
    <ligand>
        <name>Zn(2+)</name>
        <dbReference type="ChEBI" id="CHEBI:29105"/>
    </ligand>
</feature>
<feature type="binding site" evidence="1">
    <location>
        <position position="238"/>
    </location>
    <ligand>
        <name>Zn(2+)</name>
        <dbReference type="ChEBI" id="CHEBI:29105"/>
    </ligand>
</feature>
<feature type="binding site" evidence="1">
    <location>
        <position position="269"/>
    </location>
    <ligand>
        <name>ATP</name>
        <dbReference type="ChEBI" id="CHEBI:30616"/>
    </ligand>
</feature>